<accession>P0CV58</accession>
<proteinExistence type="evidence at transcript level"/>
<gene>
    <name evidence="4" type="primary">RXLR142</name>
</gene>
<dbReference type="GO" id="GO:0005576">
    <property type="term" value="C:extracellular region"/>
    <property type="evidence" value="ECO:0007669"/>
    <property type="project" value="UniProtKB-SubCell"/>
</dbReference>
<dbReference type="GO" id="GO:0042025">
    <property type="term" value="C:host cell nucleus"/>
    <property type="evidence" value="ECO:0007669"/>
    <property type="project" value="UniProtKB-SubCell"/>
</dbReference>
<reference key="1">
    <citation type="journal article" date="2018" name="Front. Plant Sci.">
        <title>In planta functional analysis and subcellular localization of the oomycete pathogen Plasmopara viticola candidate RXLR effector repertoire.</title>
        <authorList>
            <person name="Liu Y."/>
            <person name="Lan X."/>
            <person name="Song S."/>
            <person name="Yin L."/>
            <person name="Dry I.B."/>
            <person name="Qu J."/>
            <person name="Xiang J."/>
            <person name="Lu J."/>
        </authorList>
    </citation>
    <scope>NUCLEOTIDE SEQUENCE [MRNA]</scope>
    <scope>DOMAIN</scope>
    <scope>FUNCTION</scope>
    <scope>SUBCELLULAR LOCATION</scope>
</reference>
<comment type="function">
    <text evidence="3">Secreted effector that completely suppresses the host cell death induced by cell death-inducing proteins.</text>
</comment>
<comment type="subcellular location">
    <subcellularLocation>
        <location evidence="3">Secreted</location>
    </subcellularLocation>
    <subcellularLocation>
        <location evidence="3">Host nucleus</location>
    </subcellularLocation>
</comment>
<comment type="domain">
    <text evidence="6">The RxLR-dEER motif acts to carry the protein into the host cell cytoplasm through binding to cell surface phosphatidylinositol-3-phosphate.</text>
</comment>
<comment type="similarity">
    <text evidence="5">Belongs to the RxLR effector family.</text>
</comment>
<evidence type="ECO:0000255" key="1"/>
<evidence type="ECO:0000256" key="2">
    <source>
        <dbReference type="SAM" id="MobiDB-lite"/>
    </source>
</evidence>
<evidence type="ECO:0000269" key="3">
    <source>
    </source>
</evidence>
<evidence type="ECO:0000303" key="4">
    <source>
    </source>
</evidence>
<evidence type="ECO:0000305" key="5"/>
<evidence type="ECO:0000305" key="6">
    <source>
    </source>
</evidence>
<name>RL142_PLAVT</name>
<keyword id="KW-1048">Host nucleus</keyword>
<keyword id="KW-0964">Secreted</keyword>
<keyword id="KW-0732">Signal</keyword>
<keyword id="KW-0843">Virulence</keyword>
<sequence>MRRAYFVAIALLVAAGGKTAAGFKHNEPLHASSSNFMASVDTVDEDLQSQNLQESRDPKDDLKLSAGNEERTPSALNNFLKEPKLLESIITAGKAMRTEGEANAIEAASKNLNQIESNKRQRIALTHNAVAGHRGHPSPDSDKSLMSVANENPLMLAESLKDQRPTAIMENAASLLKEHDYRLAPPESSTINDKAPDGRLKNQVVTQKAVQLDKNEHVDESFWREELVSVDQLMRLLDEFDKSAHPTTVNRHEESASAVALKSSNQLESITHQRIAPTSNNVIGQVAHAPSNNVIGQVAHAPSNNVIGQVAHAPSSLSPVLVAKNIPSILADRLMKKRPTAIMKNAARYLTQHINRPAPSGPSTNGATTSNGGLNNQLTSQKTFQLDQNKHVGDVKTFWLPTAVDRQSVPEDWADEVAKGPDTFSNDAVNDEVKRVHAAFLEALNLPFHQYPQETAMMLRMVRWKKNAGPNNDITSALFKTLAKDHEEVLRLQDLLGPDLKKLLGDGKMALPRNLKNLQEALIVKLVIMYDLFFRFCYKHEDFVGDLPHNPSPASWILKL</sequence>
<organism>
    <name type="scientific">Plasmopara viticola</name>
    <name type="common">Downy mildew of grapevine</name>
    <name type="synonym">Botrytis viticola</name>
    <dbReference type="NCBI Taxonomy" id="143451"/>
    <lineage>
        <taxon>Eukaryota</taxon>
        <taxon>Sar</taxon>
        <taxon>Stramenopiles</taxon>
        <taxon>Oomycota</taxon>
        <taxon>Peronosporales</taxon>
        <taxon>Peronosporaceae</taxon>
        <taxon>Plasmopara</taxon>
    </lineage>
</organism>
<feature type="signal peptide" evidence="1">
    <location>
        <begin position="1"/>
        <end position="22"/>
    </location>
</feature>
<feature type="chain" id="PRO_0000447968" description="Secreted RxLR effector protein 142">
    <location>
        <begin position="23"/>
        <end position="560"/>
    </location>
</feature>
<feature type="region of interest" description="Disordered" evidence="2">
    <location>
        <begin position="48"/>
        <end position="73"/>
    </location>
</feature>
<feature type="region of interest" description="Disordered" evidence="2">
    <location>
        <begin position="354"/>
        <end position="377"/>
    </location>
</feature>
<feature type="short sequence motif" description="RxLR-dEER" evidence="6">
    <location>
        <begin position="56"/>
        <end position="71"/>
    </location>
</feature>
<feature type="compositionally biased region" description="Basic and acidic residues" evidence="2">
    <location>
        <begin position="54"/>
        <end position="72"/>
    </location>
</feature>
<feature type="compositionally biased region" description="Polar residues" evidence="2">
    <location>
        <begin position="361"/>
        <end position="377"/>
    </location>
</feature>
<protein>
    <recommendedName>
        <fullName evidence="4">Secreted RxLR effector protein 142</fullName>
    </recommendedName>
</protein>